<sequence>MSKIIMNKKNNDTPMIKQYLSLKLHYPNMFLFYRLGDFYELFFDDAKRISLMLDITLTKRGYSSQKEIPMAGIPYTSLNRYLSKLLKIGESAVICEQTHIIDKRTGLIERKISRVVTPGTVIDEEFLSETKNNLLGSVYYSKKRFGYATLDLCSGNFYISEYDTFESFISELQRTDPEELLIQEDFLYMNFFEKRKGIRLCKLNDFNIDSAYQQLKCHFKTKNLKSFGVYQNNLAISAAGCLLKYLKFIQYSLLPHVKSIKVRYDCNHIFMNSATRKNLEIINNISGKKEHTLLSILDNTATPMGGRLLRKWLSAPIKDIKIINKRHNIIKSLKTVYMSLSLLLKGIGDLERIISRIACRSASPKDFVSMRSALLQFSKIIFVLNSTKSKTLELISCKIKEYNSILILLRRSLKVCPSKTIKEGNVISENYNKDLDKWRKIANNASEYLQYFEVSERKRLHITSLKVNNNRVLGYYVQISKKDIKLAPNNYKKIQTLKHCVRYSTLELLDYENNVNNAKDKVLEIENYLYNELFDFIIPYIDSLKISVNTISELDVLNNLTERACVLNYVCPVISDEYGILLTDSRHPVVENLLKTPFVKNSINLSKSSNMLIITGPNMGGKSTYMRQIALIVIMAYIGSFVPAKYARIGLCDKIFTRIGSADNLAYGESTFMMEMIEMSSILRNSTSNSLVLIDELGRGTSMHDGLSLAWACIEYLAGKINAMTLFSTHYFELTKLKNYYSNIRNMYFDVLEHNNEIVFTYVIKNGFINKSYGLVVAALAKLPKCILLSAKKKLKEFYP</sequence>
<name>MUTS_BUCBP</name>
<feature type="chain" id="PRO_0000115081" description="DNA mismatch repair protein MutS">
    <location>
        <begin position="1"/>
        <end position="800"/>
    </location>
</feature>
<feature type="binding site" evidence="1">
    <location>
        <begin position="616"/>
        <end position="623"/>
    </location>
    <ligand>
        <name>ATP</name>
        <dbReference type="ChEBI" id="CHEBI:30616"/>
    </ligand>
</feature>
<proteinExistence type="inferred from homology"/>
<accession>Q89AD3</accession>
<comment type="function">
    <text evidence="1">This protein is involved in the repair of mismatches in DNA. It is possible that it carries out the mismatch recognition step. This protein has a weak ATPase activity.</text>
</comment>
<comment type="similarity">
    <text evidence="1">Belongs to the DNA mismatch repair MutS family.</text>
</comment>
<dbReference type="EMBL" id="AE016826">
    <property type="protein sequence ID" value="AAO27092.1"/>
    <property type="molecule type" value="Genomic_DNA"/>
</dbReference>
<dbReference type="RefSeq" id="WP_011091493.1">
    <property type="nucleotide sequence ID" value="NC_004545.1"/>
</dbReference>
<dbReference type="SMR" id="Q89AD3"/>
<dbReference type="STRING" id="224915.bbp_380"/>
<dbReference type="KEGG" id="bab:bbp_380"/>
<dbReference type="eggNOG" id="COG0249">
    <property type="taxonomic scope" value="Bacteria"/>
</dbReference>
<dbReference type="HOGENOM" id="CLU_002472_4_0_6"/>
<dbReference type="OrthoDB" id="9802448at2"/>
<dbReference type="Proteomes" id="UP000000601">
    <property type="component" value="Chromosome"/>
</dbReference>
<dbReference type="GO" id="GO:0005829">
    <property type="term" value="C:cytosol"/>
    <property type="evidence" value="ECO:0007669"/>
    <property type="project" value="TreeGrafter"/>
</dbReference>
<dbReference type="GO" id="GO:0005524">
    <property type="term" value="F:ATP binding"/>
    <property type="evidence" value="ECO:0007669"/>
    <property type="project" value="UniProtKB-UniRule"/>
</dbReference>
<dbReference type="GO" id="GO:0140664">
    <property type="term" value="F:ATP-dependent DNA damage sensor activity"/>
    <property type="evidence" value="ECO:0007669"/>
    <property type="project" value="InterPro"/>
</dbReference>
<dbReference type="GO" id="GO:0003684">
    <property type="term" value="F:damaged DNA binding"/>
    <property type="evidence" value="ECO:0007669"/>
    <property type="project" value="UniProtKB-UniRule"/>
</dbReference>
<dbReference type="GO" id="GO:0030983">
    <property type="term" value="F:mismatched DNA binding"/>
    <property type="evidence" value="ECO:0007669"/>
    <property type="project" value="InterPro"/>
</dbReference>
<dbReference type="GO" id="GO:0006298">
    <property type="term" value="P:mismatch repair"/>
    <property type="evidence" value="ECO:0007669"/>
    <property type="project" value="UniProtKB-UniRule"/>
</dbReference>
<dbReference type="FunFam" id="1.10.1420.10:FF:000001">
    <property type="entry name" value="DNA mismatch repair protein MutS"/>
    <property type="match status" value="1"/>
</dbReference>
<dbReference type="FunFam" id="3.40.1170.10:FF:000001">
    <property type="entry name" value="DNA mismatch repair protein MutS"/>
    <property type="match status" value="1"/>
</dbReference>
<dbReference type="FunFam" id="3.40.50.300:FF:000870">
    <property type="entry name" value="MutS protein homolog 4"/>
    <property type="match status" value="1"/>
</dbReference>
<dbReference type="Gene3D" id="1.10.1420.10">
    <property type="match status" value="2"/>
</dbReference>
<dbReference type="Gene3D" id="3.40.1170.10">
    <property type="entry name" value="DNA repair protein MutS, domain I"/>
    <property type="match status" value="1"/>
</dbReference>
<dbReference type="Gene3D" id="3.30.420.110">
    <property type="entry name" value="MutS, connector domain"/>
    <property type="match status" value="1"/>
</dbReference>
<dbReference type="Gene3D" id="3.40.50.300">
    <property type="entry name" value="P-loop containing nucleotide triphosphate hydrolases"/>
    <property type="match status" value="1"/>
</dbReference>
<dbReference type="HAMAP" id="MF_00096">
    <property type="entry name" value="MutS"/>
    <property type="match status" value="1"/>
</dbReference>
<dbReference type="InterPro" id="IPR005748">
    <property type="entry name" value="DNA_mismatch_repair_MutS"/>
</dbReference>
<dbReference type="InterPro" id="IPR007695">
    <property type="entry name" value="DNA_mismatch_repair_MutS-lik_N"/>
</dbReference>
<dbReference type="InterPro" id="IPR017261">
    <property type="entry name" value="DNA_mismatch_repair_MutS/MSH"/>
</dbReference>
<dbReference type="InterPro" id="IPR000432">
    <property type="entry name" value="DNA_mismatch_repair_MutS_C"/>
</dbReference>
<dbReference type="InterPro" id="IPR007861">
    <property type="entry name" value="DNA_mismatch_repair_MutS_clamp"/>
</dbReference>
<dbReference type="InterPro" id="IPR007696">
    <property type="entry name" value="DNA_mismatch_repair_MutS_core"/>
</dbReference>
<dbReference type="InterPro" id="IPR016151">
    <property type="entry name" value="DNA_mismatch_repair_MutS_N"/>
</dbReference>
<dbReference type="InterPro" id="IPR036187">
    <property type="entry name" value="DNA_mismatch_repair_MutS_sf"/>
</dbReference>
<dbReference type="InterPro" id="IPR007860">
    <property type="entry name" value="DNA_mmatch_repair_MutS_con_dom"/>
</dbReference>
<dbReference type="InterPro" id="IPR045076">
    <property type="entry name" value="MutS"/>
</dbReference>
<dbReference type="InterPro" id="IPR036678">
    <property type="entry name" value="MutS_con_dom_sf"/>
</dbReference>
<dbReference type="InterPro" id="IPR027417">
    <property type="entry name" value="P-loop_NTPase"/>
</dbReference>
<dbReference type="NCBIfam" id="TIGR01070">
    <property type="entry name" value="mutS1"/>
    <property type="match status" value="1"/>
</dbReference>
<dbReference type="NCBIfam" id="NF003810">
    <property type="entry name" value="PRK05399.1"/>
    <property type="match status" value="1"/>
</dbReference>
<dbReference type="PANTHER" id="PTHR11361:SF34">
    <property type="entry name" value="DNA MISMATCH REPAIR PROTEIN MSH1, MITOCHONDRIAL"/>
    <property type="match status" value="1"/>
</dbReference>
<dbReference type="PANTHER" id="PTHR11361">
    <property type="entry name" value="DNA MISMATCH REPAIR PROTEIN MUTS FAMILY MEMBER"/>
    <property type="match status" value="1"/>
</dbReference>
<dbReference type="Pfam" id="PF01624">
    <property type="entry name" value="MutS_I"/>
    <property type="match status" value="1"/>
</dbReference>
<dbReference type="Pfam" id="PF05188">
    <property type="entry name" value="MutS_II"/>
    <property type="match status" value="1"/>
</dbReference>
<dbReference type="Pfam" id="PF05192">
    <property type="entry name" value="MutS_III"/>
    <property type="match status" value="1"/>
</dbReference>
<dbReference type="Pfam" id="PF05190">
    <property type="entry name" value="MutS_IV"/>
    <property type="match status" value="1"/>
</dbReference>
<dbReference type="Pfam" id="PF00488">
    <property type="entry name" value="MutS_V"/>
    <property type="match status" value="1"/>
</dbReference>
<dbReference type="PIRSF" id="PIRSF037677">
    <property type="entry name" value="DNA_mis_repair_Msh6"/>
    <property type="match status" value="1"/>
</dbReference>
<dbReference type="SMART" id="SM00534">
    <property type="entry name" value="MUTSac"/>
    <property type="match status" value="1"/>
</dbReference>
<dbReference type="SMART" id="SM00533">
    <property type="entry name" value="MUTSd"/>
    <property type="match status" value="1"/>
</dbReference>
<dbReference type="SUPFAM" id="SSF55271">
    <property type="entry name" value="DNA repair protein MutS, domain I"/>
    <property type="match status" value="1"/>
</dbReference>
<dbReference type="SUPFAM" id="SSF53150">
    <property type="entry name" value="DNA repair protein MutS, domain II"/>
    <property type="match status" value="1"/>
</dbReference>
<dbReference type="SUPFAM" id="SSF48334">
    <property type="entry name" value="DNA repair protein MutS, domain III"/>
    <property type="match status" value="1"/>
</dbReference>
<dbReference type="SUPFAM" id="SSF52540">
    <property type="entry name" value="P-loop containing nucleoside triphosphate hydrolases"/>
    <property type="match status" value="1"/>
</dbReference>
<dbReference type="PROSITE" id="PS00486">
    <property type="entry name" value="DNA_MISMATCH_REPAIR_2"/>
    <property type="match status" value="1"/>
</dbReference>
<organism>
    <name type="scientific">Buchnera aphidicola subsp. Baizongia pistaciae (strain Bp)</name>
    <dbReference type="NCBI Taxonomy" id="224915"/>
    <lineage>
        <taxon>Bacteria</taxon>
        <taxon>Pseudomonadati</taxon>
        <taxon>Pseudomonadota</taxon>
        <taxon>Gammaproteobacteria</taxon>
        <taxon>Enterobacterales</taxon>
        <taxon>Erwiniaceae</taxon>
        <taxon>Buchnera</taxon>
    </lineage>
</organism>
<reference key="1">
    <citation type="journal article" date="2003" name="Proc. Natl. Acad. Sci. U.S.A.">
        <title>Reductive genome evolution in Buchnera aphidicola.</title>
        <authorList>
            <person name="van Ham R.C.H.J."/>
            <person name="Kamerbeek J."/>
            <person name="Palacios C."/>
            <person name="Rausell C."/>
            <person name="Abascal F."/>
            <person name="Bastolla U."/>
            <person name="Fernandez J.M."/>
            <person name="Jimenez L."/>
            <person name="Postigo M."/>
            <person name="Silva F.J."/>
            <person name="Tamames J."/>
            <person name="Viguera E."/>
            <person name="Latorre A."/>
            <person name="Valencia A."/>
            <person name="Moran F."/>
            <person name="Moya A."/>
        </authorList>
    </citation>
    <scope>NUCLEOTIDE SEQUENCE [LARGE SCALE GENOMIC DNA]</scope>
    <source>
        <strain>Bp</strain>
    </source>
</reference>
<gene>
    <name evidence="1" type="primary">mutS</name>
    <name type="ordered locus">bbp_380</name>
</gene>
<evidence type="ECO:0000255" key="1">
    <source>
        <dbReference type="HAMAP-Rule" id="MF_00096"/>
    </source>
</evidence>
<keyword id="KW-0067">ATP-binding</keyword>
<keyword id="KW-0227">DNA damage</keyword>
<keyword id="KW-0234">DNA repair</keyword>
<keyword id="KW-0238">DNA-binding</keyword>
<keyword id="KW-0547">Nucleotide-binding</keyword>
<keyword id="KW-1185">Reference proteome</keyword>
<protein>
    <recommendedName>
        <fullName evidence="1">DNA mismatch repair protein MutS</fullName>
    </recommendedName>
</protein>